<gene>
    <name evidence="1" type="primary">ppnP</name>
    <name type="ordered locus">Glov_1951</name>
</gene>
<accession>B3E2L0</accession>
<sequence>MSEFSGVTVVREANIYFNGAVASHTVLFPDGSKKTLGIMQPGEYTFSTGAAELMEILSGELDLQLAGETGWRRIGGGQSFEVPANSSFTMKVQTVSDYCCSFLS</sequence>
<protein>
    <recommendedName>
        <fullName evidence="1">Pyrimidine/purine nucleoside phosphorylase</fullName>
        <ecNumber evidence="1">2.4.2.1</ecNumber>
        <ecNumber evidence="1">2.4.2.2</ecNumber>
    </recommendedName>
    <alternativeName>
        <fullName evidence="1">Adenosine phosphorylase</fullName>
    </alternativeName>
    <alternativeName>
        <fullName evidence="1">Cytidine phosphorylase</fullName>
    </alternativeName>
    <alternativeName>
        <fullName evidence="1">Guanosine phosphorylase</fullName>
    </alternativeName>
    <alternativeName>
        <fullName evidence="1">Inosine phosphorylase</fullName>
    </alternativeName>
    <alternativeName>
        <fullName evidence="1">Thymidine phosphorylase</fullName>
    </alternativeName>
    <alternativeName>
        <fullName evidence="1">Uridine phosphorylase</fullName>
    </alternativeName>
    <alternativeName>
        <fullName evidence="1">Xanthosine phosphorylase</fullName>
    </alternativeName>
</protein>
<name>PPNP_TRIL1</name>
<evidence type="ECO:0000255" key="1">
    <source>
        <dbReference type="HAMAP-Rule" id="MF_01537"/>
    </source>
</evidence>
<dbReference type="EC" id="2.4.2.1" evidence="1"/>
<dbReference type="EC" id="2.4.2.2" evidence="1"/>
<dbReference type="EMBL" id="CP001089">
    <property type="protein sequence ID" value="ACD95667.1"/>
    <property type="molecule type" value="Genomic_DNA"/>
</dbReference>
<dbReference type="RefSeq" id="WP_012470006.1">
    <property type="nucleotide sequence ID" value="NC_010814.1"/>
</dbReference>
<dbReference type="SMR" id="B3E2L0"/>
<dbReference type="STRING" id="398767.Glov_1951"/>
<dbReference type="KEGG" id="glo:Glov_1951"/>
<dbReference type="eggNOG" id="COG3123">
    <property type="taxonomic scope" value="Bacteria"/>
</dbReference>
<dbReference type="HOGENOM" id="CLU_157874_1_0_7"/>
<dbReference type="OrthoDB" id="9793848at2"/>
<dbReference type="Proteomes" id="UP000002420">
    <property type="component" value="Chromosome"/>
</dbReference>
<dbReference type="GO" id="GO:0005829">
    <property type="term" value="C:cytosol"/>
    <property type="evidence" value="ECO:0007669"/>
    <property type="project" value="TreeGrafter"/>
</dbReference>
<dbReference type="GO" id="GO:0047975">
    <property type="term" value="F:guanosine phosphorylase activity"/>
    <property type="evidence" value="ECO:0007669"/>
    <property type="project" value="UniProtKB-EC"/>
</dbReference>
<dbReference type="GO" id="GO:0004731">
    <property type="term" value="F:purine-nucleoside phosphorylase activity"/>
    <property type="evidence" value="ECO:0007669"/>
    <property type="project" value="UniProtKB-UniRule"/>
</dbReference>
<dbReference type="GO" id="GO:0009032">
    <property type="term" value="F:thymidine phosphorylase activity"/>
    <property type="evidence" value="ECO:0007669"/>
    <property type="project" value="UniProtKB-EC"/>
</dbReference>
<dbReference type="GO" id="GO:0004850">
    <property type="term" value="F:uridine phosphorylase activity"/>
    <property type="evidence" value="ECO:0007669"/>
    <property type="project" value="UniProtKB-EC"/>
</dbReference>
<dbReference type="CDD" id="cd20296">
    <property type="entry name" value="cupin_PpnP-like"/>
    <property type="match status" value="1"/>
</dbReference>
<dbReference type="FunFam" id="2.60.120.10:FF:000016">
    <property type="entry name" value="Pyrimidine/purine nucleoside phosphorylase"/>
    <property type="match status" value="1"/>
</dbReference>
<dbReference type="Gene3D" id="2.60.120.10">
    <property type="entry name" value="Jelly Rolls"/>
    <property type="match status" value="1"/>
</dbReference>
<dbReference type="HAMAP" id="MF_01537">
    <property type="entry name" value="Nucleos_phosphorylase_PpnP"/>
    <property type="match status" value="1"/>
</dbReference>
<dbReference type="InterPro" id="IPR009664">
    <property type="entry name" value="Ppnp"/>
</dbReference>
<dbReference type="InterPro" id="IPR014710">
    <property type="entry name" value="RmlC-like_jellyroll"/>
</dbReference>
<dbReference type="InterPro" id="IPR011051">
    <property type="entry name" value="RmlC_Cupin_sf"/>
</dbReference>
<dbReference type="PANTHER" id="PTHR36540">
    <property type="entry name" value="PYRIMIDINE/PURINE NUCLEOSIDE PHOSPHORYLASE"/>
    <property type="match status" value="1"/>
</dbReference>
<dbReference type="PANTHER" id="PTHR36540:SF1">
    <property type="entry name" value="PYRIMIDINE_PURINE NUCLEOSIDE PHOSPHORYLASE"/>
    <property type="match status" value="1"/>
</dbReference>
<dbReference type="Pfam" id="PF06865">
    <property type="entry name" value="Ppnp"/>
    <property type="match status" value="1"/>
</dbReference>
<dbReference type="SUPFAM" id="SSF51182">
    <property type="entry name" value="RmlC-like cupins"/>
    <property type="match status" value="1"/>
</dbReference>
<reference key="1">
    <citation type="submission" date="2008-05" db="EMBL/GenBank/DDBJ databases">
        <title>Complete sequence of chromosome of Geobacter lovleyi SZ.</title>
        <authorList>
            <consortium name="US DOE Joint Genome Institute"/>
            <person name="Lucas S."/>
            <person name="Copeland A."/>
            <person name="Lapidus A."/>
            <person name="Glavina del Rio T."/>
            <person name="Dalin E."/>
            <person name="Tice H."/>
            <person name="Bruce D."/>
            <person name="Goodwin L."/>
            <person name="Pitluck S."/>
            <person name="Chertkov O."/>
            <person name="Meincke L."/>
            <person name="Brettin T."/>
            <person name="Detter J.C."/>
            <person name="Han C."/>
            <person name="Tapia R."/>
            <person name="Kuske C.R."/>
            <person name="Schmutz J."/>
            <person name="Larimer F."/>
            <person name="Land M."/>
            <person name="Hauser L."/>
            <person name="Kyrpides N."/>
            <person name="Mikhailova N."/>
            <person name="Sung Y."/>
            <person name="Fletcher K.E."/>
            <person name="Ritalahti K.M."/>
            <person name="Loeffler F.E."/>
            <person name="Richardson P."/>
        </authorList>
    </citation>
    <scope>NUCLEOTIDE SEQUENCE [LARGE SCALE GENOMIC DNA]</scope>
    <source>
        <strain>ATCC BAA-1151 / DSM 17278 / SZ</strain>
    </source>
</reference>
<feature type="chain" id="PRO_1000198667" description="Pyrimidine/purine nucleoside phosphorylase">
    <location>
        <begin position="1"/>
        <end position="104"/>
    </location>
</feature>
<organism>
    <name type="scientific">Trichlorobacter lovleyi (strain ATCC BAA-1151 / DSM 17278 / SZ)</name>
    <name type="common">Geobacter lovleyi</name>
    <dbReference type="NCBI Taxonomy" id="398767"/>
    <lineage>
        <taxon>Bacteria</taxon>
        <taxon>Pseudomonadati</taxon>
        <taxon>Thermodesulfobacteriota</taxon>
        <taxon>Desulfuromonadia</taxon>
        <taxon>Geobacterales</taxon>
        <taxon>Geobacteraceae</taxon>
        <taxon>Trichlorobacter</taxon>
    </lineage>
</organism>
<keyword id="KW-0328">Glycosyltransferase</keyword>
<keyword id="KW-1185">Reference proteome</keyword>
<keyword id="KW-0808">Transferase</keyword>
<proteinExistence type="inferred from homology"/>
<comment type="function">
    <text evidence="1">Catalyzes the phosphorolysis of diverse nucleosides, yielding D-ribose 1-phosphate and the respective free bases. Can use uridine, adenosine, guanosine, cytidine, thymidine, inosine and xanthosine as substrates. Also catalyzes the reverse reactions.</text>
</comment>
<comment type="catalytic activity">
    <reaction evidence="1">
        <text>a purine D-ribonucleoside + phosphate = a purine nucleobase + alpha-D-ribose 1-phosphate</text>
        <dbReference type="Rhea" id="RHEA:19805"/>
        <dbReference type="ChEBI" id="CHEBI:26386"/>
        <dbReference type="ChEBI" id="CHEBI:43474"/>
        <dbReference type="ChEBI" id="CHEBI:57720"/>
        <dbReference type="ChEBI" id="CHEBI:142355"/>
        <dbReference type="EC" id="2.4.2.1"/>
    </reaction>
</comment>
<comment type="catalytic activity">
    <reaction evidence="1">
        <text>adenosine + phosphate = alpha-D-ribose 1-phosphate + adenine</text>
        <dbReference type="Rhea" id="RHEA:27642"/>
        <dbReference type="ChEBI" id="CHEBI:16335"/>
        <dbReference type="ChEBI" id="CHEBI:16708"/>
        <dbReference type="ChEBI" id="CHEBI:43474"/>
        <dbReference type="ChEBI" id="CHEBI:57720"/>
        <dbReference type="EC" id="2.4.2.1"/>
    </reaction>
</comment>
<comment type="catalytic activity">
    <reaction evidence="1">
        <text>cytidine + phosphate = cytosine + alpha-D-ribose 1-phosphate</text>
        <dbReference type="Rhea" id="RHEA:52540"/>
        <dbReference type="ChEBI" id="CHEBI:16040"/>
        <dbReference type="ChEBI" id="CHEBI:17562"/>
        <dbReference type="ChEBI" id="CHEBI:43474"/>
        <dbReference type="ChEBI" id="CHEBI:57720"/>
        <dbReference type="EC" id="2.4.2.2"/>
    </reaction>
</comment>
<comment type="catalytic activity">
    <reaction evidence="1">
        <text>guanosine + phosphate = alpha-D-ribose 1-phosphate + guanine</text>
        <dbReference type="Rhea" id="RHEA:13233"/>
        <dbReference type="ChEBI" id="CHEBI:16235"/>
        <dbReference type="ChEBI" id="CHEBI:16750"/>
        <dbReference type="ChEBI" id="CHEBI:43474"/>
        <dbReference type="ChEBI" id="CHEBI:57720"/>
        <dbReference type="EC" id="2.4.2.1"/>
    </reaction>
</comment>
<comment type="catalytic activity">
    <reaction evidence="1">
        <text>inosine + phosphate = alpha-D-ribose 1-phosphate + hypoxanthine</text>
        <dbReference type="Rhea" id="RHEA:27646"/>
        <dbReference type="ChEBI" id="CHEBI:17368"/>
        <dbReference type="ChEBI" id="CHEBI:17596"/>
        <dbReference type="ChEBI" id="CHEBI:43474"/>
        <dbReference type="ChEBI" id="CHEBI:57720"/>
        <dbReference type="EC" id="2.4.2.1"/>
    </reaction>
</comment>
<comment type="catalytic activity">
    <reaction evidence="1">
        <text>thymidine + phosphate = 2-deoxy-alpha-D-ribose 1-phosphate + thymine</text>
        <dbReference type="Rhea" id="RHEA:16037"/>
        <dbReference type="ChEBI" id="CHEBI:17748"/>
        <dbReference type="ChEBI" id="CHEBI:17821"/>
        <dbReference type="ChEBI" id="CHEBI:43474"/>
        <dbReference type="ChEBI" id="CHEBI:57259"/>
        <dbReference type="EC" id="2.4.2.2"/>
    </reaction>
</comment>
<comment type="catalytic activity">
    <reaction evidence="1">
        <text>uridine + phosphate = alpha-D-ribose 1-phosphate + uracil</text>
        <dbReference type="Rhea" id="RHEA:24388"/>
        <dbReference type="ChEBI" id="CHEBI:16704"/>
        <dbReference type="ChEBI" id="CHEBI:17568"/>
        <dbReference type="ChEBI" id="CHEBI:43474"/>
        <dbReference type="ChEBI" id="CHEBI:57720"/>
        <dbReference type="EC" id="2.4.2.2"/>
    </reaction>
</comment>
<comment type="catalytic activity">
    <reaction evidence="1">
        <text>xanthosine + phosphate = alpha-D-ribose 1-phosphate + xanthine</text>
        <dbReference type="Rhea" id="RHEA:27638"/>
        <dbReference type="ChEBI" id="CHEBI:17712"/>
        <dbReference type="ChEBI" id="CHEBI:18107"/>
        <dbReference type="ChEBI" id="CHEBI:43474"/>
        <dbReference type="ChEBI" id="CHEBI:57720"/>
        <dbReference type="EC" id="2.4.2.1"/>
    </reaction>
</comment>
<comment type="similarity">
    <text evidence="1">Belongs to the nucleoside phosphorylase PpnP family.</text>
</comment>